<dbReference type="EMBL" id="X07653">
    <property type="protein sequence ID" value="CAA30495.2"/>
    <property type="status" value="ALT_SEQ"/>
    <property type="molecule type" value="Genomic_RNA"/>
</dbReference>
<dbReference type="PIR" id="S00950">
    <property type="entry name" value="S00950"/>
</dbReference>
<dbReference type="KEGG" id="vg:1492000"/>
<dbReference type="Proteomes" id="UP000006722">
    <property type="component" value="Genome"/>
</dbReference>
<dbReference type="GO" id="GO:0044229">
    <property type="term" value="C:host cell periplasmic space"/>
    <property type="evidence" value="ECO:0007669"/>
    <property type="project" value="UniProtKB-SubCell"/>
</dbReference>
<dbReference type="GO" id="GO:0044219">
    <property type="term" value="C:host cell plasmodesma"/>
    <property type="evidence" value="ECO:0007669"/>
    <property type="project" value="UniProtKB-SubCell"/>
</dbReference>
<dbReference type="GO" id="GO:0016020">
    <property type="term" value="C:membrane"/>
    <property type="evidence" value="ECO:0007669"/>
    <property type="project" value="UniProtKB-SubCell"/>
</dbReference>
<dbReference type="GO" id="GO:0019028">
    <property type="term" value="C:viral capsid"/>
    <property type="evidence" value="ECO:0007669"/>
    <property type="project" value="UniProtKB-KW"/>
</dbReference>
<dbReference type="GO" id="GO:0005198">
    <property type="term" value="F:structural molecule activity"/>
    <property type="evidence" value="ECO:0007669"/>
    <property type="project" value="InterPro"/>
</dbReference>
<dbReference type="InterPro" id="IPR001517">
    <property type="entry name" value="Luteo_coat"/>
</dbReference>
<dbReference type="InterPro" id="IPR002929">
    <property type="entry name" value="PLrV_ORF5"/>
</dbReference>
<dbReference type="Pfam" id="PF00894">
    <property type="entry name" value="Luteo_coat"/>
    <property type="match status" value="1"/>
</dbReference>
<dbReference type="Pfam" id="PF01690">
    <property type="entry name" value="PLRV_ORF5"/>
    <property type="match status" value="1"/>
</dbReference>
<dbReference type="PRINTS" id="PR00915">
    <property type="entry name" value="LUTEOGP1COAT"/>
</dbReference>
<organismHost>
    <name type="scientific">Avena byzantina</name>
    <dbReference type="NCBI Taxonomy" id="146531"/>
</organismHost>
<organismHost>
    <name type="scientific">Avena sativa</name>
    <name type="common">Oat</name>
    <dbReference type="NCBI Taxonomy" id="4498"/>
</organismHost>
<organismHost>
    <name type="scientific">Hordeum vulgare</name>
    <name type="common">Barley</name>
    <dbReference type="NCBI Taxonomy" id="4513"/>
</organismHost>
<organismHost>
    <name type="scientific">Lolium multiflorum</name>
    <name type="common">Italian ryegrass</name>
    <name type="synonym">Lolium perenne subsp. multiflorum</name>
    <dbReference type="NCBI Taxonomy" id="4521"/>
</organismHost>
<organismHost>
    <name type="scientific">Lolium perenne</name>
    <name type="common">Perennial ryegrass</name>
    <dbReference type="NCBI Taxonomy" id="4522"/>
</organismHost>
<organismHost>
    <name type="scientific">Oryza sativa</name>
    <name type="common">Rice</name>
    <dbReference type="NCBI Taxonomy" id="4530"/>
</organismHost>
<organismHost>
    <name type="scientific">Secale cereale</name>
    <name type="common">Rye</name>
    <dbReference type="NCBI Taxonomy" id="4550"/>
</organismHost>
<organismHost>
    <name type="scientific">Triticum aestivum</name>
    <name type="common">Wheat</name>
    <dbReference type="NCBI Taxonomy" id="4565"/>
</organismHost>
<organismHost>
    <name type="scientific">Zea mays</name>
    <name type="common">Maize</name>
    <dbReference type="NCBI Taxonomy" id="4577"/>
</organismHost>
<comment type="function">
    <molecule>Minor capsid readthrough protein</molecule>
    <text evidence="1 6">Minor component of the viral capsid involved in aphid transmission and virus accumulation in the host (PubMed:8623554). Required fro the virus to move through the aphid (PubMed:8623554). The RTD domain of the protein is exposed on the surface of the particle and determines the vector specificity and intestinal tropism in the aphid (By similarity).</text>
</comment>
<comment type="subcellular location">
    <molecule>Cleaved product</molecule>
    <subcellularLocation>
        <location evidence="5">Membrane</location>
    </subcellularLocation>
</comment>
<comment type="subcellular location">
    <molecule>Minor capsid readthrough protein</molecule>
    <subcellularLocation>
        <location evidence="4 5">Virion</location>
    </subcellularLocation>
    <subcellularLocation>
        <location evidence="2">Host cell junction</location>
        <location evidence="2">Host plasmodesma</location>
    </subcellularLocation>
    <subcellularLocation>
        <location evidence="2">Host periplasm</location>
    </subcellularLocation>
</comment>
<comment type="domain">
    <molecule>Readthrough protein P3-RTD</molecule>
    <text evidence="1 6 9">The N-terminus is highly basic like those of many plant virus capsid proteins (Probable). These regions may be involved in protein-RNA interaction (Probable). The RTD N-terminus is responsible for aphid transmission and aphid endosymbiont interaction (By similarity). The readthrough domain is required for transport of virus through membranes of the aphid salivary glands (PubMed:8623554).</text>
</comment>
<comment type="PTM">
    <molecule>Readthrough protein P3-RTD</molecule>
    <text evidence="2 10">In virus particles, more than 200 amino acids are proteolytically cleaved releasing the C-terminus part of the RTD domain (Probable). The cleaved product remains attached to the virus particle (By similarity).</text>
</comment>
<comment type="miscellaneous">
    <text evidence="11">This protein is translated as a fusion protein by episodic readthrough of the major coat protein termination codon. It is composed of the major capsid protein fused to a long C-terminal extension called the readthrough domain (RTD). Readthrough of the terminator codon TAG occurs between the codons for 200-Lys and 202-Val.</text>
</comment>
<comment type="similarity">
    <text evidence="9">Belongs to the luteoviruses readthrough protein family.</text>
</comment>
<comment type="sequence caution" evidence="9">
    <conflict type="miscellaneous discrepancy">
        <sequence resource="EMBL-CDS" id="CAA30495"/>
    </conflict>
    <text>Readthrough of an in-frame TAG stop codon in position 201 translated as Tyr.</text>
</comment>
<evidence type="ECO:0000250" key="1">
    <source>
        <dbReference type="UniProtKB" id="P09514"/>
    </source>
</evidence>
<evidence type="ECO:0000250" key="2">
    <source>
        <dbReference type="UniProtKB" id="P17525"/>
    </source>
</evidence>
<evidence type="ECO:0000256" key="3">
    <source>
        <dbReference type="SAM" id="MobiDB-lite"/>
    </source>
</evidence>
<evidence type="ECO:0000269" key="4">
    <source>
    </source>
</evidence>
<evidence type="ECO:0000269" key="5">
    <source>
    </source>
</evidence>
<evidence type="ECO:0000269" key="6">
    <source>
    </source>
</evidence>
<evidence type="ECO:0000303" key="7">
    <source>
    </source>
</evidence>
<evidence type="ECO:0000303" key="8">
    <source>
    </source>
</evidence>
<evidence type="ECO:0000305" key="9"/>
<evidence type="ECO:0000305" key="10">
    <source>
    </source>
</evidence>
<evidence type="ECO:0000305" key="11">
    <source>
    </source>
</evidence>
<proteinExistence type="evidence at protein level"/>
<accession>P09516</accession>
<protein>
    <recommendedName>
        <fullName>Readthrough protein P3-RTD</fullName>
    </recommendedName>
    <alternativeName>
        <fullName evidence="2">P3-P5 readthrough protein</fullName>
    </alternativeName>
    <alternativeName>
        <fullName evidence="8">P72</fullName>
    </alternativeName>
    <alternativeName>
        <fullName>Readthrough protein</fullName>
        <shortName>RT protein</shortName>
    </alternativeName>
    <component>
        <recommendedName>
            <fullName evidence="1">Minor capsid readthrough protein</fullName>
            <shortName evidence="1">Minor capsid RT protein</shortName>
        </recommendedName>
        <alternativeName>
            <fullName evidence="8">P50</fullName>
        </alternativeName>
        <alternativeName>
            <fullName evidence="7">P58</fullName>
        </alternativeName>
    </component>
    <component>
        <recommendedName>
            <fullName evidence="9">Cleaved product</fullName>
        </recommendedName>
        <alternativeName>
            <fullName evidence="8">P33</fullName>
        </alternativeName>
    </component>
</protein>
<feature type="chain" id="PRO_0000222428" description="Readthrough protein P3-RTD">
    <location>
        <begin position="1"/>
        <end position="651"/>
    </location>
</feature>
<feature type="chain" id="PRO_0000455343" description="Minor capsid readthrough protein">
    <location>
        <begin position="1"/>
        <end position="460"/>
    </location>
</feature>
<feature type="chain" id="PRO_0000455344" description="Cleaved product">
    <location>
        <begin position="461"/>
        <end position="651"/>
    </location>
</feature>
<feature type="region of interest" description="Disordered" evidence="3">
    <location>
        <begin position="1"/>
        <end position="25"/>
    </location>
</feature>
<feature type="region of interest" description="Disordered" evidence="3">
    <location>
        <begin position="33"/>
        <end position="52"/>
    </location>
</feature>
<feature type="region of interest" description="Disordered" evidence="3">
    <location>
        <begin position="201"/>
        <end position="239"/>
    </location>
</feature>
<feature type="region of interest" description="Readthrough domain (RTD)">
    <location>
        <begin position="202"/>
        <end position="650"/>
    </location>
</feature>
<feature type="region of interest" description="Disordered" evidence="3">
    <location>
        <begin position="525"/>
        <end position="552"/>
    </location>
</feature>
<feature type="region of interest" description="Disordered" evidence="3">
    <location>
        <begin position="606"/>
        <end position="626"/>
    </location>
</feature>
<feature type="compositionally biased region" description="Basic residues" evidence="3">
    <location>
        <begin position="37"/>
        <end position="48"/>
    </location>
</feature>
<feature type="compositionally biased region" description="Pro residues" evidence="3">
    <location>
        <begin position="208"/>
        <end position="236"/>
    </location>
</feature>
<feature type="compositionally biased region" description="Polar residues" evidence="3">
    <location>
        <begin position="531"/>
        <end position="543"/>
    </location>
</feature>
<feature type="compositionally biased region" description="Low complexity" evidence="3">
    <location>
        <begin position="608"/>
        <end position="621"/>
    </location>
</feature>
<organism>
    <name type="scientific">Barley yellow dwarf virus (isolate PAV)</name>
    <name type="common">BYDV</name>
    <dbReference type="NCBI Taxonomy" id="2169986"/>
    <lineage>
        <taxon>Viruses</taxon>
        <taxon>Riboviria</taxon>
        <taxon>Orthornavirae</taxon>
        <taxon>Kitrinoviricota</taxon>
        <taxon>Tolucaviricetes</taxon>
        <taxon>Tolivirales</taxon>
        <taxon>Tombusviridae</taxon>
        <taxon>Regressovirinae</taxon>
        <taxon>Luteovirus</taxon>
        <taxon>Luteovirus pavhordei</taxon>
    </lineage>
</organism>
<sequence>MNSVGRRGPRRANQNGTRRRRRRTVRPVVVVQPNRAGPRRRNGRRKGRGGANFVFRPTGGTEVFVFSVDNLKANSSGAIKFGPSLSQCPALSDGILKSYHRYKITSIRVEFKSHASANTAGAIFIELDTACKQSALGSYINSFTISKTASKTFRSEAINGKEFQESTIDQFWMLYKANGTTTDTAGQFIITMSVSLMTAKXVDSSTPEPKPAPEPTPTPQPTPAPQPTPEPTPAPVPKRFFEYIGTPTGTISTRENTDSISVSKLGGQSMQYIENEKCETKVIDSFWSTNNNVSAQAAFVYPVPEGSYSVNISCEGFQSVDHIGGNEDGYWIGLIAYSNSSGDNWGVGNYKGCSFKNFLATNTWRPGHKDLKLTDCQFTDGQIVERDAVMSFHVEATGKDASFYLMAPKTMKTDKYNYVVSYGGYTNKRMEFGTISVTCDESDVEAERITRHAETPIRSKHILVSERYAEPLPTIVNQGLCDVKTPEQEQTLVDEDDRQTVSTESDIALLEYEAATAEIPDAEEDVLPSKEQLSSKPMDTSGNIIPKPKEPEVLGTYQGQNIYPEDVPPMARQKLREAANAPSTLLYERRTPKKSGNFLSRLVEANRSPTTPTAPSVSTTSNMTREQLREYTRIRNSSGITAAKAYKAQFQ</sequence>
<reference key="1">
    <citation type="journal article" date="1988" name="Nucleic Acids Res.">
        <title>Sequence and organization of barley yellow dwarf virus genomic RNA.</title>
        <authorList>
            <person name="Miller W.A."/>
            <person name="Waterhouse P.M."/>
            <person name="Gerlach W.L."/>
        </authorList>
    </citation>
    <scope>NUCLEOTIDE SEQUENCE [GENOMIC RNA]</scope>
</reference>
<reference key="2">
    <citation type="journal article" date="1994" name="Virology">
        <title>Detection of the readthrough protein of barley yellow dwarf virus.</title>
        <authorList>
            <person name="Cheng S.L."/>
            <person name="Domier L.L."/>
            <person name="D'Arcy C.J."/>
        </authorList>
    </citation>
    <scope>READTHROUGH (READTHROUGH PROTEIN P3-RTD)</scope>
</reference>
<reference key="3">
    <citation type="journal article" date="1994" name="Virology">
        <title>In vivo expression and mutational analysis of the barley yellow dwarf virus readthrough gene.</title>
        <authorList>
            <person name="Filichkin S.A."/>
            <person name="Lister R.M."/>
            <person name="McGrath P.F."/>
            <person name="Young M.J."/>
        </authorList>
    </citation>
    <scope>PROTEOLYTIC CLEAVAGE (READTHROUGH PROTEIN P3-RTD)</scope>
    <scope>SUBCELLULAR LOCATION (CLEAVED PRODUCT)</scope>
    <scope>SUBCELLULAR LOCATION (MINOR CAPSID READTHROUGH PROTEIN)</scope>
</reference>
<reference key="4">
    <citation type="journal article" date="1995" name="Virology">
        <title>Readthrough protein associated with virions of barley yellow dwarf luteovirus and its potential role in regulating the efficiency of aphid transmission.</title>
        <authorList>
            <person name="Wang J.Y."/>
            <person name="Chay C."/>
            <person name="Gildow F.E."/>
            <person name="Gray S.M."/>
        </authorList>
    </citation>
    <scope>SUBCELLULAR LOCATION (MINOR CAPSID READTHROUGH PROTEIN)</scope>
</reference>
<reference key="5">
    <citation type="journal article" date="1996" name="Virology">
        <title>Aphid transmission and systemic plant infection determinants of barley yellow dwarf luteovirus-PAV are contained in the coat protein readthrough domain and 17-kDa protein, respectively.</title>
        <authorList>
            <person name="Chay C.A."/>
            <person name="Gunasinge U.B."/>
            <person name="Dinesh-Kumar S.P."/>
            <person name="Miller W.A."/>
            <person name="Gray S.M."/>
        </authorList>
    </citation>
    <scope>FUNCTION (MINOR CAPSID READTHROUGH PROTEIN)</scope>
    <scope>DOMAIN (READTHROUGH PROTEIN P3-RTD)</scope>
</reference>
<keyword id="KW-0167">Capsid protein</keyword>
<keyword id="KW-1031">Host cell junction</keyword>
<keyword id="KW-1049">Host periplasm</keyword>
<keyword id="KW-0472">Membrane</keyword>
<keyword id="KW-1185">Reference proteome</keyword>
<keyword id="KW-1159">RNA suppression of termination</keyword>
<keyword id="KW-0946">Virion</keyword>
<gene>
    <name type="ORF">ORF3/ORF5</name>
</gene>
<name>MCAPS_BYDVP</name>